<organism>
    <name type="scientific">Marinomonas sp. (strain MWYL1)</name>
    <dbReference type="NCBI Taxonomy" id="400668"/>
    <lineage>
        <taxon>Bacteria</taxon>
        <taxon>Pseudomonadati</taxon>
        <taxon>Pseudomonadota</taxon>
        <taxon>Gammaproteobacteria</taxon>
        <taxon>Oceanospirillales</taxon>
        <taxon>Oceanospirillaceae</taxon>
        <taxon>Marinomonas</taxon>
    </lineage>
</organism>
<gene>
    <name evidence="1" type="primary">ubiA</name>
    <name type="ordered locus">Mmwyl1_4399</name>
</gene>
<dbReference type="EC" id="2.5.1.39" evidence="1"/>
<dbReference type="EMBL" id="CP000749">
    <property type="protein sequence ID" value="ABR73294.1"/>
    <property type="molecule type" value="Genomic_DNA"/>
</dbReference>
<dbReference type="SMR" id="A6W3L5"/>
<dbReference type="STRING" id="400668.Mmwyl1_4399"/>
<dbReference type="KEGG" id="mmw:Mmwyl1_4399"/>
<dbReference type="eggNOG" id="COG0382">
    <property type="taxonomic scope" value="Bacteria"/>
</dbReference>
<dbReference type="HOGENOM" id="CLU_034879_1_0_6"/>
<dbReference type="OrthoDB" id="9782418at2"/>
<dbReference type="UniPathway" id="UPA00232"/>
<dbReference type="GO" id="GO:0005886">
    <property type="term" value="C:plasma membrane"/>
    <property type="evidence" value="ECO:0007669"/>
    <property type="project" value="UniProtKB-SubCell"/>
</dbReference>
<dbReference type="GO" id="GO:0008412">
    <property type="term" value="F:4-hydroxybenzoate polyprenyltransferase activity"/>
    <property type="evidence" value="ECO:0007669"/>
    <property type="project" value="UniProtKB-UniRule"/>
</dbReference>
<dbReference type="GO" id="GO:0006744">
    <property type="term" value="P:ubiquinone biosynthetic process"/>
    <property type="evidence" value="ECO:0007669"/>
    <property type="project" value="UniProtKB-UniRule"/>
</dbReference>
<dbReference type="CDD" id="cd13959">
    <property type="entry name" value="PT_UbiA_COQ2"/>
    <property type="match status" value="1"/>
</dbReference>
<dbReference type="FunFam" id="1.10.357.140:FF:000002">
    <property type="entry name" value="4-hydroxybenzoate octaprenyltransferase"/>
    <property type="match status" value="1"/>
</dbReference>
<dbReference type="FunFam" id="1.20.120.1780:FF:000001">
    <property type="entry name" value="4-hydroxybenzoate octaprenyltransferase"/>
    <property type="match status" value="1"/>
</dbReference>
<dbReference type="Gene3D" id="1.10.357.140">
    <property type="entry name" value="UbiA prenyltransferase"/>
    <property type="match status" value="1"/>
</dbReference>
<dbReference type="Gene3D" id="1.20.120.1780">
    <property type="entry name" value="UbiA prenyltransferase"/>
    <property type="match status" value="1"/>
</dbReference>
<dbReference type="HAMAP" id="MF_01635">
    <property type="entry name" value="UbiA"/>
    <property type="match status" value="1"/>
</dbReference>
<dbReference type="InterPro" id="IPR006370">
    <property type="entry name" value="HB_polyprenyltransferase-like"/>
</dbReference>
<dbReference type="InterPro" id="IPR039653">
    <property type="entry name" value="Prenyltransferase"/>
</dbReference>
<dbReference type="InterPro" id="IPR000537">
    <property type="entry name" value="UbiA_prenyltransferase"/>
</dbReference>
<dbReference type="InterPro" id="IPR044878">
    <property type="entry name" value="UbiA_sf"/>
</dbReference>
<dbReference type="NCBIfam" id="TIGR01474">
    <property type="entry name" value="ubiA_proteo"/>
    <property type="match status" value="1"/>
</dbReference>
<dbReference type="PANTHER" id="PTHR11048:SF28">
    <property type="entry name" value="4-HYDROXYBENZOATE POLYPRENYLTRANSFERASE, MITOCHONDRIAL"/>
    <property type="match status" value="1"/>
</dbReference>
<dbReference type="PANTHER" id="PTHR11048">
    <property type="entry name" value="PRENYLTRANSFERASES"/>
    <property type="match status" value="1"/>
</dbReference>
<dbReference type="Pfam" id="PF01040">
    <property type="entry name" value="UbiA"/>
    <property type="match status" value="1"/>
</dbReference>
<evidence type="ECO:0000255" key="1">
    <source>
        <dbReference type="HAMAP-Rule" id="MF_01635"/>
    </source>
</evidence>
<sequence>MNKLKDYAELTRFNRPIGSFLLMWPTLWALWLAADGMPQWHLVIIFILGVFSMRSAGCVINDYADRKVDGFVDRTKNRPLPSGRVSEKEALMLFCALSILSFILVLFTDLRTILLSFVGLGLAALYPFMKRYTHLPQLFLGLAFSWAIPMAYSAQGGDLTDPKLWMLFVANCFWTIAYDTYYAMTDRPDDLKIGIKSTAILFGQYDLFVIICLQGLTLSLLTWIGLLAGLHWLYFVSLIVCVGLFYQQFKQAKERDRQACFRSFLDNNRVGYCVFIGLVASYFM</sequence>
<keyword id="KW-0997">Cell inner membrane</keyword>
<keyword id="KW-1003">Cell membrane</keyword>
<keyword id="KW-0460">Magnesium</keyword>
<keyword id="KW-0472">Membrane</keyword>
<keyword id="KW-0808">Transferase</keyword>
<keyword id="KW-0812">Transmembrane</keyword>
<keyword id="KW-1133">Transmembrane helix</keyword>
<keyword id="KW-0831">Ubiquinone biosynthesis</keyword>
<protein>
    <recommendedName>
        <fullName evidence="1">4-hydroxybenzoate octaprenyltransferase</fullName>
        <ecNumber evidence="1">2.5.1.39</ecNumber>
    </recommendedName>
    <alternativeName>
        <fullName evidence="1">4-HB polyprenyltransferase</fullName>
    </alternativeName>
</protein>
<reference key="1">
    <citation type="submission" date="2007-06" db="EMBL/GenBank/DDBJ databases">
        <title>Complete sequence of Marinomonas sp. MWYL1.</title>
        <authorList>
            <consortium name="US DOE Joint Genome Institute"/>
            <person name="Copeland A."/>
            <person name="Lucas S."/>
            <person name="Lapidus A."/>
            <person name="Barry K."/>
            <person name="Glavina del Rio T."/>
            <person name="Dalin E."/>
            <person name="Tice H."/>
            <person name="Pitluck S."/>
            <person name="Kiss H."/>
            <person name="Brettin T."/>
            <person name="Bruce D."/>
            <person name="Detter J.C."/>
            <person name="Han C."/>
            <person name="Schmutz J."/>
            <person name="Larimer F."/>
            <person name="Land M."/>
            <person name="Hauser L."/>
            <person name="Kyrpides N."/>
            <person name="Kim E."/>
            <person name="Johnston A.W.B."/>
            <person name="Todd J.D."/>
            <person name="Rogers R."/>
            <person name="Wexler M."/>
            <person name="Bond P.L."/>
            <person name="Li Y."/>
            <person name="Richardson P."/>
        </authorList>
    </citation>
    <scope>NUCLEOTIDE SEQUENCE [LARGE SCALE GENOMIC DNA]</scope>
    <source>
        <strain>MWYL1</strain>
    </source>
</reference>
<accession>A6W3L5</accession>
<proteinExistence type="inferred from homology"/>
<comment type="function">
    <text evidence="1">Catalyzes the prenylation of para-hydroxybenzoate (PHB) with an all-trans polyprenyl group. Mediates the second step in the final reaction sequence of ubiquinone-8 (UQ-8) biosynthesis, which is the condensation of the polyisoprenoid side chain with PHB, generating the first membrane-bound Q intermediate 3-octaprenyl-4-hydroxybenzoate.</text>
</comment>
<comment type="catalytic activity">
    <reaction evidence="1">
        <text>all-trans-octaprenyl diphosphate + 4-hydroxybenzoate = 4-hydroxy-3-(all-trans-octaprenyl)benzoate + diphosphate</text>
        <dbReference type="Rhea" id="RHEA:27782"/>
        <dbReference type="ChEBI" id="CHEBI:1617"/>
        <dbReference type="ChEBI" id="CHEBI:17879"/>
        <dbReference type="ChEBI" id="CHEBI:33019"/>
        <dbReference type="ChEBI" id="CHEBI:57711"/>
        <dbReference type="EC" id="2.5.1.39"/>
    </reaction>
</comment>
<comment type="cofactor">
    <cofactor evidence="1">
        <name>Mg(2+)</name>
        <dbReference type="ChEBI" id="CHEBI:18420"/>
    </cofactor>
</comment>
<comment type="pathway">
    <text evidence="1">Cofactor biosynthesis; ubiquinone biosynthesis.</text>
</comment>
<comment type="subcellular location">
    <subcellularLocation>
        <location evidence="1">Cell inner membrane</location>
        <topology evidence="1">Multi-pass membrane protein</topology>
    </subcellularLocation>
</comment>
<comment type="similarity">
    <text evidence="1">Belongs to the UbiA prenyltransferase family.</text>
</comment>
<feature type="chain" id="PRO_1000088175" description="4-hydroxybenzoate octaprenyltransferase">
    <location>
        <begin position="1"/>
        <end position="284"/>
    </location>
</feature>
<feature type="transmembrane region" description="Helical" evidence="1">
    <location>
        <begin position="13"/>
        <end position="32"/>
    </location>
</feature>
<feature type="transmembrane region" description="Helical" evidence="1">
    <location>
        <begin position="90"/>
        <end position="110"/>
    </location>
</feature>
<feature type="transmembrane region" description="Helical" evidence="1">
    <location>
        <begin position="112"/>
        <end position="132"/>
    </location>
</feature>
<feature type="transmembrane region" description="Helical" evidence="1">
    <location>
        <begin position="134"/>
        <end position="154"/>
    </location>
</feature>
<feature type="transmembrane region" description="Helical" evidence="1">
    <location>
        <begin position="164"/>
        <end position="184"/>
    </location>
</feature>
<feature type="transmembrane region" description="Helical" evidence="1">
    <location>
        <begin position="200"/>
        <end position="220"/>
    </location>
</feature>
<feature type="transmembrane region" description="Helical" evidence="1">
    <location>
        <begin position="224"/>
        <end position="244"/>
    </location>
</feature>
<name>UBIA_MARMS</name>